<accession>C1AG24</accession>
<evidence type="ECO:0000255" key="1">
    <source>
        <dbReference type="HAMAP-Rule" id="MF_00385"/>
    </source>
</evidence>
<evidence type="ECO:0000256" key="2">
    <source>
        <dbReference type="SAM" id="MobiDB-lite"/>
    </source>
</evidence>
<evidence type="ECO:0000305" key="3"/>
<dbReference type="EMBL" id="AP010918">
    <property type="protein sequence ID" value="BAH27203.1"/>
    <property type="molecule type" value="Genomic_DNA"/>
</dbReference>
<dbReference type="RefSeq" id="WP_003414731.1">
    <property type="nucleotide sequence ID" value="NZ_CP014566.1"/>
</dbReference>
<dbReference type="SMR" id="C1AG24"/>
<dbReference type="GeneID" id="45426896"/>
<dbReference type="KEGG" id="mbt:JTY_2925"/>
<dbReference type="HOGENOM" id="CLU_100590_1_1_11"/>
<dbReference type="GO" id="GO:0005737">
    <property type="term" value="C:cytoplasm"/>
    <property type="evidence" value="ECO:0007669"/>
    <property type="project" value="UniProtKB-ARBA"/>
</dbReference>
<dbReference type="GO" id="GO:0015935">
    <property type="term" value="C:small ribosomal subunit"/>
    <property type="evidence" value="ECO:0007669"/>
    <property type="project" value="TreeGrafter"/>
</dbReference>
<dbReference type="GO" id="GO:0003735">
    <property type="term" value="F:structural constituent of ribosome"/>
    <property type="evidence" value="ECO:0007669"/>
    <property type="project" value="InterPro"/>
</dbReference>
<dbReference type="GO" id="GO:0006412">
    <property type="term" value="P:translation"/>
    <property type="evidence" value="ECO:0007669"/>
    <property type="project" value="UniProtKB-UniRule"/>
</dbReference>
<dbReference type="FunFam" id="3.30.1320.10:FF:000009">
    <property type="entry name" value="30S ribosomal protein S16"/>
    <property type="match status" value="1"/>
</dbReference>
<dbReference type="Gene3D" id="3.30.1320.10">
    <property type="match status" value="1"/>
</dbReference>
<dbReference type="HAMAP" id="MF_00385">
    <property type="entry name" value="Ribosomal_bS16"/>
    <property type="match status" value="1"/>
</dbReference>
<dbReference type="InterPro" id="IPR000307">
    <property type="entry name" value="Ribosomal_bS16"/>
</dbReference>
<dbReference type="InterPro" id="IPR020592">
    <property type="entry name" value="Ribosomal_bS16_CS"/>
</dbReference>
<dbReference type="InterPro" id="IPR023803">
    <property type="entry name" value="Ribosomal_bS16_dom_sf"/>
</dbReference>
<dbReference type="NCBIfam" id="NF011093">
    <property type="entry name" value="PRK14520.1"/>
    <property type="match status" value="1"/>
</dbReference>
<dbReference type="NCBIfam" id="TIGR00002">
    <property type="entry name" value="S16"/>
    <property type="match status" value="1"/>
</dbReference>
<dbReference type="PANTHER" id="PTHR12919">
    <property type="entry name" value="30S RIBOSOMAL PROTEIN S16"/>
    <property type="match status" value="1"/>
</dbReference>
<dbReference type="PANTHER" id="PTHR12919:SF20">
    <property type="entry name" value="SMALL RIBOSOMAL SUBUNIT PROTEIN BS16M"/>
    <property type="match status" value="1"/>
</dbReference>
<dbReference type="Pfam" id="PF00886">
    <property type="entry name" value="Ribosomal_S16"/>
    <property type="match status" value="1"/>
</dbReference>
<dbReference type="SUPFAM" id="SSF54565">
    <property type="entry name" value="Ribosomal protein S16"/>
    <property type="match status" value="1"/>
</dbReference>
<dbReference type="PROSITE" id="PS00732">
    <property type="entry name" value="RIBOSOMAL_S16"/>
    <property type="match status" value="1"/>
</dbReference>
<proteinExistence type="inferred from homology"/>
<organism>
    <name type="scientific">Mycobacterium bovis (strain BCG / Tokyo 172 / ATCC 35737 / TMC 1019)</name>
    <dbReference type="NCBI Taxonomy" id="561275"/>
    <lineage>
        <taxon>Bacteria</taxon>
        <taxon>Bacillati</taxon>
        <taxon>Actinomycetota</taxon>
        <taxon>Actinomycetes</taxon>
        <taxon>Mycobacteriales</taxon>
        <taxon>Mycobacteriaceae</taxon>
        <taxon>Mycobacterium</taxon>
        <taxon>Mycobacterium tuberculosis complex</taxon>
    </lineage>
</organism>
<name>RS16_MYCBT</name>
<protein>
    <recommendedName>
        <fullName evidence="1">Small ribosomal subunit protein bS16</fullName>
    </recommendedName>
    <alternativeName>
        <fullName evidence="3">30S ribosomal protein S16</fullName>
    </alternativeName>
</protein>
<keyword id="KW-0687">Ribonucleoprotein</keyword>
<keyword id="KW-0689">Ribosomal protein</keyword>
<feature type="chain" id="PRO_1000196440" description="Small ribosomal subunit protein bS16">
    <location>
        <begin position="1"/>
        <end position="162"/>
    </location>
</feature>
<feature type="region of interest" description="Disordered" evidence="2">
    <location>
        <begin position="113"/>
        <end position="162"/>
    </location>
</feature>
<feature type="compositionally biased region" description="Basic residues" evidence="2">
    <location>
        <begin position="124"/>
        <end position="134"/>
    </location>
</feature>
<comment type="similarity">
    <text evidence="1">Belongs to the bacterial ribosomal protein bS16 family.</text>
</comment>
<sequence>MAVKIKLTRLGKIRNPQYRVAVADARTRRDGRAIEVIGRYHPKEEPSLIEINSERAQYWLSVGAQPTEPVLKLLKITGDWQKFKGLPGAQGRLKVAAPKPSKLEVFNAALAAADGGPTTEATKPKKKSPAKKAAKAAEPAPQPEQPDTPALGGEQAELTAES</sequence>
<gene>
    <name evidence="1" type="primary">rpsP</name>
    <name type="ordered locus">JTY_2925</name>
</gene>
<reference key="1">
    <citation type="journal article" date="2009" name="Vaccine">
        <title>Whole genome sequence analysis of Mycobacterium bovis bacillus Calmette-Guerin (BCG) Tokyo 172: a comparative study of BCG vaccine substrains.</title>
        <authorList>
            <person name="Seki M."/>
            <person name="Honda I."/>
            <person name="Fujita I."/>
            <person name="Yano I."/>
            <person name="Yamamoto S."/>
            <person name="Koyama A."/>
        </authorList>
    </citation>
    <scope>NUCLEOTIDE SEQUENCE [LARGE SCALE GENOMIC DNA]</scope>
    <source>
        <strain>BCG / Tokyo 172 / ATCC 35737 / TMC 1019</strain>
    </source>
</reference>